<name>CO040_HUMAN</name>
<evidence type="ECO:0000256" key="1">
    <source>
        <dbReference type="SAM" id="MobiDB-lite"/>
    </source>
</evidence>
<evidence type="ECO:0000269" key="2">
    <source>
    </source>
</evidence>
<evidence type="ECO:0000305" key="3"/>
<evidence type="ECO:0007744" key="4">
    <source>
    </source>
</evidence>
<proteinExistence type="evidence at protein level"/>
<keyword id="KW-0025">Alternative splicing</keyword>
<keyword id="KW-0597">Phosphoprotein</keyword>
<keyword id="KW-1267">Proteomics identification</keyword>
<keyword id="KW-1185">Reference proteome</keyword>
<organism>
    <name type="scientific">Homo sapiens</name>
    <name type="common">Human</name>
    <dbReference type="NCBI Taxonomy" id="9606"/>
    <lineage>
        <taxon>Eukaryota</taxon>
        <taxon>Metazoa</taxon>
        <taxon>Chordata</taxon>
        <taxon>Craniata</taxon>
        <taxon>Vertebrata</taxon>
        <taxon>Euteleostomi</taxon>
        <taxon>Mammalia</taxon>
        <taxon>Eutheria</taxon>
        <taxon>Euarchontoglires</taxon>
        <taxon>Primates</taxon>
        <taxon>Haplorrhini</taxon>
        <taxon>Catarrhini</taxon>
        <taxon>Hominidae</taxon>
        <taxon>Homo</taxon>
    </lineage>
</organism>
<protein>
    <recommendedName>
        <fullName>UPF0235 protein C15orf40</fullName>
    </recommendedName>
</protein>
<reference key="1">
    <citation type="journal article" date="2004" name="Nat. Genet.">
        <title>Complete sequencing and characterization of 21,243 full-length human cDNAs.</title>
        <authorList>
            <person name="Ota T."/>
            <person name="Suzuki Y."/>
            <person name="Nishikawa T."/>
            <person name="Otsuki T."/>
            <person name="Sugiyama T."/>
            <person name="Irie R."/>
            <person name="Wakamatsu A."/>
            <person name="Hayashi K."/>
            <person name="Sato H."/>
            <person name="Nagai K."/>
            <person name="Kimura K."/>
            <person name="Makita H."/>
            <person name="Sekine M."/>
            <person name="Obayashi M."/>
            <person name="Nishi T."/>
            <person name="Shibahara T."/>
            <person name="Tanaka T."/>
            <person name="Ishii S."/>
            <person name="Yamamoto J."/>
            <person name="Saito K."/>
            <person name="Kawai Y."/>
            <person name="Isono Y."/>
            <person name="Nakamura Y."/>
            <person name="Nagahari K."/>
            <person name="Murakami K."/>
            <person name="Yasuda T."/>
            <person name="Iwayanagi T."/>
            <person name="Wagatsuma M."/>
            <person name="Shiratori A."/>
            <person name="Sudo H."/>
            <person name="Hosoiri T."/>
            <person name="Kaku Y."/>
            <person name="Kodaira H."/>
            <person name="Kondo H."/>
            <person name="Sugawara M."/>
            <person name="Takahashi M."/>
            <person name="Kanda K."/>
            <person name="Yokoi T."/>
            <person name="Furuya T."/>
            <person name="Kikkawa E."/>
            <person name="Omura Y."/>
            <person name="Abe K."/>
            <person name="Kamihara K."/>
            <person name="Katsuta N."/>
            <person name="Sato K."/>
            <person name="Tanikawa M."/>
            <person name="Yamazaki M."/>
            <person name="Ninomiya K."/>
            <person name="Ishibashi T."/>
            <person name="Yamashita H."/>
            <person name="Murakawa K."/>
            <person name="Fujimori K."/>
            <person name="Tanai H."/>
            <person name="Kimata M."/>
            <person name="Watanabe M."/>
            <person name="Hiraoka S."/>
            <person name="Chiba Y."/>
            <person name="Ishida S."/>
            <person name="Ono Y."/>
            <person name="Takiguchi S."/>
            <person name="Watanabe S."/>
            <person name="Yosida M."/>
            <person name="Hotuta T."/>
            <person name="Kusano J."/>
            <person name="Kanehori K."/>
            <person name="Takahashi-Fujii A."/>
            <person name="Hara H."/>
            <person name="Tanase T.-O."/>
            <person name="Nomura Y."/>
            <person name="Togiya S."/>
            <person name="Komai F."/>
            <person name="Hara R."/>
            <person name="Takeuchi K."/>
            <person name="Arita M."/>
            <person name="Imose N."/>
            <person name="Musashino K."/>
            <person name="Yuuki H."/>
            <person name="Oshima A."/>
            <person name="Sasaki N."/>
            <person name="Aotsuka S."/>
            <person name="Yoshikawa Y."/>
            <person name="Matsunawa H."/>
            <person name="Ichihara T."/>
            <person name="Shiohata N."/>
            <person name="Sano S."/>
            <person name="Moriya S."/>
            <person name="Momiyama H."/>
            <person name="Satoh N."/>
            <person name="Takami S."/>
            <person name="Terashima Y."/>
            <person name="Suzuki O."/>
            <person name="Nakagawa S."/>
            <person name="Senoh A."/>
            <person name="Mizoguchi H."/>
            <person name="Goto Y."/>
            <person name="Shimizu F."/>
            <person name="Wakebe H."/>
            <person name="Hishigaki H."/>
            <person name="Watanabe T."/>
            <person name="Sugiyama A."/>
            <person name="Takemoto M."/>
            <person name="Kawakami B."/>
            <person name="Yamazaki M."/>
            <person name="Watanabe K."/>
            <person name="Kumagai A."/>
            <person name="Itakura S."/>
            <person name="Fukuzumi Y."/>
            <person name="Fujimori Y."/>
            <person name="Komiyama M."/>
            <person name="Tashiro H."/>
            <person name="Tanigami A."/>
            <person name="Fujiwara T."/>
            <person name="Ono T."/>
            <person name="Yamada K."/>
            <person name="Fujii Y."/>
            <person name="Ozaki K."/>
            <person name="Hirao M."/>
            <person name="Ohmori Y."/>
            <person name="Kawabata A."/>
            <person name="Hikiji T."/>
            <person name="Kobatake N."/>
            <person name="Inagaki H."/>
            <person name="Ikema Y."/>
            <person name="Okamoto S."/>
            <person name="Okitani R."/>
            <person name="Kawakami T."/>
            <person name="Noguchi S."/>
            <person name="Itoh T."/>
            <person name="Shigeta K."/>
            <person name="Senba T."/>
            <person name="Matsumura K."/>
            <person name="Nakajima Y."/>
            <person name="Mizuno T."/>
            <person name="Morinaga M."/>
            <person name="Sasaki M."/>
            <person name="Togashi T."/>
            <person name="Oyama M."/>
            <person name="Hata H."/>
            <person name="Watanabe M."/>
            <person name="Komatsu T."/>
            <person name="Mizushima-Sugano J."/>
            <person name="Satoh T."/>
            <person name="Shirai Y."/>
            <person name="Takahashi Y."/>
            <person name="Nakagawa K."/>
            <person name="Okumura K."/>
            <person name="Nagase T."/>
            <person name="Nomura N."/>
            <person name="Kikuchi H."/>
            <person name="Masuho Y."/>
            <person name="Yamashita R."/>
            <person name="Nakai K."/>
            <person name="Yada T."/>
            <person name="Nakamura Y."/>
            <person name="Ohara O."/>
            <person name="Isogai T."/>
            <person name="Sugano S."/>
        </authorList>
    </citation>
    <scope>NUCLEOTIDE SEQUENCE [LARGE SCALE MRNA] (ISOFORM 1)</scope>
    <source>
        <tissue>Subthalamic nucleus</tissue>
    </source>
</reference>
<reference key="2">
    <citation type="journal article" date="2006" name="Nature">
        <title>Analysis of the DNA sequence and duplication history of human chromosome 15.</title>
        <authorList>
            <person name="Zody M.C."/>
            <person name="Garber M."/>
            <person name="Sharpe T."/>
            <person name="Young S.K."/>
            <person name="Rowen L."/>
            <person name="O'Neill K."/>
            <person name="Whittaker C.A."/>
            <person name="Kamal M."/>
            <person name="Chang J.L."/>
            <person name="Cuomo C.A."/>
            <person name="Dewar K."/>
            <person name="FitzGerald M.G."/>
            <person name="Kodira C.D."/>
            <person name="Madan A."/>
            <person name="Qin S."/>
            <person name="Yang X."/>
            <person name="Abbasi N."/>
            <person name="Abouelleil A."/>
            <person name="Arachchi H.M."/>
            <person name="Baradarani L."/>
            <person name="Birditt B."/>
            <person name="Bloom S."/>
            <person name="Bloom T."/>
            <person name="Borowsky M.L."/>
            <person name="Burke J."/>
            <person name="Butler J."/>
            <person name="Cook A."/>
            <person name="DeArellano K."/>
            <person name="DeCaprio D."/>
            <person name="Dorris L. III"/>
            <person name="Dors M."/>
            <person name="Eichler E.E."/>
            <person name="Engels R."/>
            <person name="Fahey J."/>
            <person name="Fleetwood P."/>
            <person name="Friedman C."/>
            <person name="Gearin G."/>
            <person name="Hall J.L."/>
            <person name="Hensley G."/>
            <person name="Johnson E."/>
            <person name="Jones C."/>
            <person name="Kamat A."/>
            <person name="Kaur A."/>
            <person name="Locke D.P."/>
            <person name="Madan A."/>
            <person name="Munson G."/>
            <person name="Jaffe D.B."/>
            <person name="Lui A."/>
            <person name="Macdonald P."/>
            <person name="Mauceli E."/>
            <person name="Naylor J.W."/>
            <person name="Nesbitt R."/>
            <person name="Nicol R."/>
            <person name="O'Leary S.B."/>
            <person name="Ratcliffe A."/>
            <person name="Rounsley S."/>
            <person name="She X."/>
            <person name="Sneddon K.M.B."/>
            <person name="Stewart S."/>
            <person name="Sougnez C."/>
            <person name="Stone S.M."/>
            <person name="Topham K."/>
            <person name="Vincent D."/>
            <person name="Wang S."/>
            <person name="Zimmer A.R."/>
            <person name="Birren B.W."/>
            <person name="Hood L."/>
            <person name="Lander E.S."/>
            <person name="Nusbaum C."/>
        </authorList>
    </citation>
    <scope>NUCLEOTIDE SEQUENCE [LARGE SCALE GENOMIC DNA]</scope>
</reference>
<reference key="3">
    <citation type="submission" date="2005-07" db="EMBL/GenBank/DDBJ databases">
        <authorList>
            <person name="Mural R.J."/>
            <person name="Istrail S."/>
            <person name="Sutton G.G."/>
            <person name="Florea L."/>
            <person name="Halpern A.L."/>
            <person name="Mobarry C.M."/>
            <person name="Lippert R."/>
            <person name="Walenz B."/>
            <person name="Shatkay H."/>
            <person name="Dew I."/>
            <person name="Miller J.R."/>
            <person name="Flanigan M.J."/>
            <person name="Edwards N.J."/>
            <person name="Bolanos R."/>
            <person name="Fasulo D."/>
            <person name="Halldorsson B.V."/>
            <person name="Hannenhalli S."/>
            <person name="Turner R."/>
            <person name="Yooseph S."/>
            <person name="Lu F."/>
            <person name="Nusskern D.R."/>
            <person name="Shue B.C."/>
            <person name="Zheng X.H."/>
            <person name="Zhong F."/>
            <person name="Delcher A.L."/>
            <person name="Huson D.H."/>
            <person name="Kravitz S.A."/>
            <person name="Mouchard L."/>
            <person name="Reinert K."/>
            <person name="Remington K.A."/>
            <person name="Clark A.G."/>
            <person name="Waterman M.S."/>
            <person name="Eichler E.E."/>
            <person name="Adams M.D."/>
            <person name="Hunkapiller M.W."/>
            <person name="Myers E.W."/>
            <person name="Venter J.C."/>
        </authorList>
    </citation>
    <scope>NUCLEOTIDE SEQUENCE [LARGE SCALE GENOMIC DNA]</scope>
</reference>
<reference key="4">
    <citation type="journal article" date="2004" name="Genome Res.">
        <title>The status, quality, and expansion of the NIH full-length cDNA project: the Mammalian Gene Collection (MGC).</title>
        <authorList>
            <consortium name="The MGC Project Team"/>
        </authorList>
    </citation>
    <scope>NUCLEOTIDE SEQUENCE [LARGE SCALE MRNA] (ISOFORM 1)</scope>
    <source>
        <tissue>Kidney</tissue>
    </source>
</reference>
<reference key="5">
    <citation type="journal article" date="2008" name="Proc. Natl. Acad. Sci. U.S.A.">
        <title>A quantitative atlas of mitotic phosphorylation.</title>
        <authorList>
            <person name="Dephoure N."/>
            <person name="Zhou C."/>
            <person name="Villen J."/>
            <person name="Beausoleil S.A."/>
            <person name="Bakalarski C.E."/>
            <person name="Elledge S.J."/>
            <person name="Gygi S.P."/>
        </authorList>
    </citation>
    <scope>IDENTIFICATION BY MASS SPECTROMETRY [LARGE SCALE ANALYSIS]</scope>
    <source>
        <tissue>Cervix carcinoma</tissue>
    </source>
</reference>
<reference key="6">
    <citation type="journal article" date="2010" name="Sci. Signal.">
        <title>Quantitative phosphoproteomics reveals widespread full phosphorylation site occupancy during mitosis.</title>
        <authorList>
            <person name="Olsen J.V."/>
            <person name="Vermeulen M."/>
            <person name="Santamaria A."/>
            <person name="Kumar C."/>
            <person name="Miller M.L."/>
            <person name="Jensen L.J."/>
            <person name="Gnad F."/>
            <person name="Cox J."/>
            <person name="Jensen T.S."/>
            <person name="Nigg E.A."/>
            <person name="Brunak S."/>
            <person name="Mann M."/>
        </authorList>
    </citation>
    <scope>IDENTIFICATION BY MASS SPECTROMETRY [LARGE SCALE ANALYSIS]</scope>
    <source>
        <tissue>Cervix carcinoma</tissue>
    </source>
</reference>
<reference key="7">
    <citation type="journal article" date="2013" name="J. Proteome Res.">
        <title>Toward a comprehensive characterization of a human cancer cell phosphoproteome.</title>
        <authorList>
            <person name="Zhou H."/>
            <person name="Di Palma S."/>
            <person name="Preisinger C."/>
            <person name="Peng M."/>
            <person name="Polat A.N."/>
            <person name="Heck A.J."/>
            <person name="Mohammed S."/>
        </authorList>
    </citation>
    <scope>PHOSPHORYLATION [LARGE SCALE ANALYSIS] AT SER-116</scope>
    <scope>IDENTIFICATION BY MASS SPECTROMETRY [LARGE SCALE ANALYSIS]</scope>
    <source>
        <tissue>Cervix carcinoma</tissue>
        <tissue>Erythroleukemia</tissue>
    </source>
</reference>
<reference key="8">
    <citation type="journal article" date="2012" name="N. Engl. J. Med.">
        <title>Diagnostic exome sequencing in persons with severe intellectual disability.</title>
        <authorList>
            <person name="de Ligt J."/>
            <person name="Willemsen M.H."/>
            <person name="van Bon B.W."/>
            <person name="Kleefstra T."/>
            <person name="Yntema H.G."/>
            <person name="Kroes T."/>
            <person name="Vulto-van Silfhout A.T."/>
            <person name="Koolen D.A."/>
            <person name="de Vries P."/>
            <person name="Gilissen C."/>
            <person name="del Rosario M."/>
            <person name="Hoischen A."/>
            <person name="Scheffer H."/>
            <person name="de Vries B.B."/>
            <person name="Brunner H.G."/>
            <person name="Veltman J.A."/>
            <person name="Vissers L.E."/>
        </authorList>
    </citation>
    <scope>VARIANT THR-89</scope>
</reference>
<sequence>MLRLRSGLRHLRATPNTRGSARLLCAEMPKKAGATTKGKSQSKEPERPLPPLGPVAVDPKGCVTIAIHAKPGSKQNAVTDLTAEAVNVAIAAPPSEGEANAELCRYLSKVLELRKSDVVLDKGGKSREKVVKLLASTTPEEILEKLKKEAKKT</sequence>
<dbReference type="EMBL" id="AK312160">
    <property type="protein sequence ID" value="BAG35094.1"/>
    <property type="molecule type" value="mRNA"/>
</dbReference>
<dbReference type="EMBL" id="AC022558">
    <property type="status" value="NOT_ANNOTATED_CDS"/>
    <property type="molecule type" value="Genomic_DNA"/>
</dbReference>
<dbReference type="EMBL" id="CH471188">
    <property type="protein sequence ID" value="EAW62431.1"/>
    <property type="molecule type" value="Genomic_DNA"/>
</dbReference>
<dbReference type="EMBL" id="BC019820">
    <property type="protein sequence ID" value="AAH19820.1"/>
    <property type="molecule type" value="mRNA"/>
</dbReference>
<dbReference type="CCDS" id="CCDS32312.2">
    <molecule id="Q8WUR7-1"/>
</dbReference>
<dbReference type="CCDS" id="CCDS53968.1">
    <molecule id="Q8WUR7-2"/>
</dbReference>
<dbReference type="CCDS" id="CCDS53969.1">
    <molecule id="Q8WUR7-3"/>
</dbReference>
<dbReference type="RefSeq" id="NP_001153587.1">
    <molecule id="Q8WUR7-3"/>
    <property type="nucleotide sequence ID" value="NM_001160115.2"/>
</dbReference>
<dbReference type="RefSeq" id="NP_001153588.1">
    <molecule id="Q8WUR7-2"/>
    <property type="nucleotide sequence ID" value="NM_001160116.2"/>
</dbReference>
<dbReference type="RefSeq" id="NP_653198.2">
    <molecule id="Q8WUR7-1"/>
    <property type="nucleotide sequence ID" value="NM_144597.3"/>
</dbReference>
<dbReference type="SMR" id="Q8WUR7"/>
<dbReference type="BioGRID" id="125818">
    <property type="interactions" value="10"/>
</dbReference>
<dbReference type="FunCoup" id="Q8WUR7">
    <property type="interactions" value="963"/>
</dbReference>
<dbReference type="IntAct" id="Q8WUR7">
    <property type="interactions" value="5"/>
</dbReference>
<dbReference type="STRING" id="9606.ENSP00000403987"/>
<dbReference type="GlyGen" id="Q8WUR7">
    <property type="glycosylation" value="3 sites, 1 O-linked glycan (3 sites)"/>
</dbReference>
<dbReference type="iPTMnet" id="Q8WUR7"/>
<dbReference type="PhosphoSitePlus" id="Q8WUR7"/>
<dbReference type="BioMuta" id="C15orf40"/>
<dbReference type="DMDM" id="510120802"/>
<dbReference type="jPOST" id="Q8WUR7"/>
<dbReference type="MassIVE" id="Q8WUR7"/>
<dbReference type="PaxDb" id="9606-ENSP00000403987"/>
<dbReference type="PeptideAtlas" id="Q8WUR7"/>
<dbReference type="ProteomicsDB" id="24351"/>
<dbReference type="ProteomicsDB" id="31358"/>
<dbReference type="ProteomicsDB" id="34098"/>
<dbReference type="ProteomicsDB" id="74703">
    <molecule id="Q8WUR7-1"/>
</dbReference>
<dbReference type="Pumba" id="Q8WUR7"/>
<dbReference type="Antibodypedia" id="49874">
    <property type="antibodies" value="173 antibodies from 18 providers"/>
</dbReference>
<dbReference type="DNASU" id="123207"/>
<dbReference type="Ensembl" id="ENST00000304177.10">
    <molecule id="Q8WUR7-1"/>
    <property type="protein sequence ID" value="ENSP00000307071.6"/>
    <property type="gene ID" value="ENSG00000169609.14"/>
</dbReference>
<dbReference type="Ensembl" id="ENST00000451195.7">
    <molecule id="Q8WUR7-3"/>
    <property type="protein sequence ID" value="ENSP00000403987.3"/>
    <property type="gene ID" value="ENSG00000169609.14"/>
</dbReference>
<dbReference type="Ensembl" id="ENST00000538348.6">
    <molecule id="Q8WUR7-2"/>
    <property type="protein sequence ID" value="ENSP00000441077.2"/>
    <property type="gene ID" value="ENSG00000169609.14"/>
</dbReference>
<dbReference type="GeneID" id="123207"/>
<dbReference type="KEGG" id="hsa:123207"/>
<dbReference type="MANE-Select" id="ENST00000304177.10">
    <property type="protein sequence ID" value="ENSP00000307071.6"/>
    <property type="RefSeq nucleotide sequence ID" value="NM_144597.3"/>
    <property type="RefSeq protein sequence ID" value="NP_653198.2"/>
</dbReference>
<dbReference type="UCSC" id="uc002bjm.4">
    <molecule id="Q8WUR7-1"/>
    <property type="organism name" value="human"/>
</dbReference>
<dbReference type="AGR" id="HGNC:28443"/>
<dbReference type="CTD" id="123207"/>
<dbReference type="DisGeNET" id="123207"/>
<dbReference type="GeneCards" id="C15orf40"/>
<dbReference type="HGNC" id="HGNC:28443">
    <property type="gene designation" value="C15orf40"/>
</dbReference>
<dbReference type="HPA" id="ENSG00000169609">
    <property type="expression patterns" value="Low tissue specificity"/>
</dbReference>
<dbReference type="neXtProt" id="NX_Q8WUR7"/>
<dbReference type="OpenTargets" id="ENSG00000169609"/>
<dbReference type="PharmGKB" id="PA142672276"/>
<dbReference type="VEuPathDB" id="HostDB:ENSG00000169609"/>
<dbReference type="eggNOG" id="KOG3276">
    <property type="taxonomic scope" value="Eukaryota"/>
</dbReference>
<dbReference type="GeneTree" id="ENSGT00390000012420"/>
<dbReference type="HOGENOM" id="CLU_1739852_0_0_1"/>
<dbReference type="InParanoid" id="Q8WUR7"/>
<dbReference type="OMA" id="NICIQIL"/>
<dbReference type="OrthoDB" id="244097at2759"/>
<dbReference type="PAN-GO" id="Q8WUR7">
    <property type="GO annotations" value="1 GO annotation based on evolutionary models"/>
</dbReference>
<dbReference type="TreeFam" id="TF313882"/>
<dbReference type="PathwayCommons" id="Q8WUR7"/>
<dbReference type="SignaLink" id="Q8WUR7"/>
<dbReference type="BioGRID-ORCS" id="123207">
    <property type="hits" value="13 hits in 1127 CRISPR screens"/>
</dbReference>
<dbReference type="ChiTaRS" id="C15orf40">
    <property type="organism name" value="human"/>
</dbReference>
<dbReference type="GenomeRNAi" id="123207"/>
<dbReference type="Pharos" id="Q8WUR7">
    <property type="development level" value="Tdark"/>
</dbReference>
<dbReference type="PRO" id="PR:Q8WUR7"/>
<dbReference type="Proteomes" id="UP000005640">
    <property type="component" value="Chromosome 15"/>
</dbReference>
<dbReference type="RNAct" id="Q8WUR7">
    <property type="molecule type" value="protein"/>
</dbReference>
<dbReference type="Bgee" id="ENSG00000169609">
    <property type="expression patterns" value="Expressed in olfactory segment of nasal mucosa and 169 other cell types or tissues"/>
</dbReference>
<dbReference type="ExpressionAtlas" id="Q8WUR7">
    <property type="expression patterns" value="baseline and differential"/>
</dbReference>
<dbReference type="GO" id="GO:0005737">
    <property type="term" value="C:cytoplasm"/>
    <property type="evidence" value="ECO:0000318"/>
    <property type="project" value="GO_Central"/>
</dbReference>
<dbReference type="GO" id="GO:0005739">
    <property type="term" value="C:mitochondrion"/>
    <property type="evidence" value="ECO:0006056"/>
    <property type="project" value="FlyBase"/>
</dbReference>
<dbReference type="Gene3D" id="3.30.1200.10">
    <property type="entry name" value="YggU-like"/>
    <property type="match status" value="1"/>
</dbReference>
<dbReference type="HAMAP" id="MF_00634">
    <property type="entry name" value="UPF0235"/>
    <property type="match status" value="1"/>
</dbReference>
<dbReference type="InterPro" id="IPR003746">
    <property type="entry name" value="DUF167"/>
</dbReference>
<dbReference type="InterPro" id="IPR036591">
    <property type="entry name" value="YggU-like_sf"/>
</dbReference>
<dbReference type="NCBIfam" id="TIGR00251">
    <property type="entry name" value="DUF167 family protein"/>
    <property type="match status" value="1"/>
</dbReference>
<dbReference type="PANTHER" id="PTHR13420">
    <property type="entry name" value="UPF0235 PROTEIN C15ORF40"/>
    <property type="match status" value="1"/>
</dbReference>
<dbReference type="PANTHER" id="PTHR13420:SF7">
    <property type="entry name" value="UPF0235 PROTEIN C15ORF40"/>
    <property type="match status" value="1"/>
</dbReference>
<dbReference type="Pfam" id="PF02594">
    <property type="entry name" value="DUF167"/>
    <property type="match status" value="1"/>
</dbReference>
<dbReference type="SMART" id="SM01152">
    <property type="entry name" value="DUF167"/>
    <property type="match status" value="1"/>
</dbReference>
<dbReference type="SUPFAM" id="SSF69786">
    <property type="entry name" value="YggU-like"/>
    <property type="match status" value="1"/>
</dbReference>
<gene>
    <name type="primary">C15orf40</name>
</gene>
<accession>Q8WUR7</accession>
<accession>A6NIC9</accession>
<accession>B2R5E7</accession>
<accession>F5GX92</accession>
<accession>F8WD31</accession>
<accession>G5EA00</accession>
<feature type="chain" id="PRO_0000139475" description="UPF0235 protein C15orf40">
    <location>
        <begin position="1"/>
        <end position="153"/>
    </location>
</feature>
<feature type="region of interest" description="Disordered" evidence="1">
    <location>
        <begin position="1"/>
        <end position="55"/>
    </location>
</feature>
<feature type="compositionally biased region" description="Basic residues" evidence="1">
    <location>
        <begin position="1"/>
        <end position="12"/>
    </location>
</feature>
<feature type="modified residue" description="Phosphoserine" evidence="4">
    <location>
        <position position="116"/>
    </location>
</feature>
<feature type="splice variant" id="VSP_046500" description="In isoform 2." evidence="3">
    <original>GGKSREKVVKLLASTTPEEILEKLKKEAKKT</original>
    <variation>LCYSIPQQLEETQEGVSGIPDTPCHFL</variation>
    <location>
        <begin position="123"/>
        <end position="153"/>
    </location>
</feature>
<feature type="splice variant" id="VSP_046501" description="In isoform 3." evidence="3">
    <original>GGKSREKVVKLLASTTPEEILEKLKKEAKKT</original>
    <variation>TGSCYIAQAGLELLASSDLPASASQSAGITGVSHHTQPALLLISL</variation>
    <location>
        <begin position="123"/>
        <end position="153"/>
    </location>
</feature>
<feature type="sequence variant" id="VAR_069397" description="In dbSNP:rs376937425." evidence="2">
    <original>A</original>
    <variation>T</variation>
    <location>
        <position position="89"/>
    </location>
</feature>
<comment type="alternative products">
    <event type="alternative splicing"/>
    <isoform>
        <id>Q8WUR7-1</id>
        <name>1</name>
        <sequence type="displayed"/>
    </isoform>
    <isoform>
        <id>Q8WUR7-2</id>
        <name>2</name>
        <sequence type="described" ref="VSP_046500"/>
    </isoform>
    <isoform>
        <id>Q8WUR7-3</id>
        <name>3</name>
        <sequence type="described" ref="VSP_046501"/>
    </isoform>
</comment>
<comment type="similarity">
    <text evidence="3">Belongs to the UPF0235 family.</text>
</comment>
<comment type="caution">
    <text evidence="3">It is uncertain whether Met-1 or Met-28 is the initiator. Some orthologous sequences cannot be extended.</text>
</comment>